<name>RSMH_CERS1</name>
<accession>A3PHR7</accession>
<sequence>MAEADTERRPHIPVLLRPLLAAVAPVEGTWLDGTFGAGGYARGLLEAGADRVIGVDRDPLALKMASGWAGDYGDRLRLVAGTFSQLDSHAGAPLDGVVLDLGVSSMQLDLAERGFSFQKDGPLDMRMSQEGESAADLVNTASEESLADILYHYGEERASRRIARAIVEARAAAPITRTLALAEIVARCLPRPKPGQMHPATRSFQAIRIAVNAEFSELVEGLEAAERALRPGGRLAVVTFHSLEDRIVKRFLQLRSGGEGQGNRYAPETRAYAPRFTLPLRRAISPDEAELAENPRARSARLRVGVRTDAPAGKVDPQALGTPLIPKKGRR</sequence>
<dbReference type="EC" id="2.1.1.199" evidence="1"/>
<dbReference type="EMBL" id="CP000577">
    <property type="protein sequence ID" value="ABN75883.1"/>
    <property type="molecule type" value="Genomic_DNA"/>
</dbReference>
<dbReference type="RefSeq" id="WP_011840595.1">
    <property type="nucleotide sequence ID" value="NC_009049.1"/>
</dbReference>
<dbReference type="SMR" id="A3PHR7"/>
<dbReference type="KEGG" id="rsh:Rsph17029_0772"/>
<dbReference type="HOGENOM" id="CLU_038422_1_1_5"/>
<dbReference type="GO" id="GO:0005737">
    <property type="term" value="C:cytoplasm"/>
    <property type="evidence" value="ECO:0007669"/>
    <property type="project" value="UniProtKB-SubCell"/>
</dbReference>
<dbReference type="GO" id="GO:0071424">
    <property type="term" value="F:rRNA (cytosine-N4-)-methyltransferase activity"/>
    <property type="evidence" value="ECO:0007669"/>
    <property type="project" value="UniProtKB-UniRule"/>
</dbReference>
<dbReference type="GO" id="GO:0070475">
    <property type="term" value="P:rRNA base methylation"/>
    <property type="evidence" value="ECO:0007669"/>
    <property type="project" value="UniProtKB-UniRule"/>
</dbReference>
<dbReference type="CDD" id="cd02440">
    <property type="entry name" value="AdoMet_MTases"/>
    <property type="match status" value="1"/>
</dbReference>
<dbReference type="FunFam" id="1.10.150.170:FF:000003">
    <property type="entry name" value="Ribosomal RNA small subunit methyltransferase H"/>
    <property type="match status" value="1"/>
</dbReference>
<dbReference type="Gene3D" id="1.10.150.170">
    <property type="entry name" value="Putative methyltransferase TM0872, insert domain"/>
    <property type="match status" value="1"/>
</dbReference>
<dbReference type="Gene3D" id="3.40.50.150">
    <property type="entry name" value="Vaccinia Virus protein VP39"/>
    <property type="match status" value="1"/>
</dbReference>
<dbReference type="HAMAP" id="MF_01007">
    <property type="entry name" value="16SrRNA_methyltr_H"/>
    <property type="match status" value="1"/>
</dbReference>
<dbReference type="InterPro" id="IPR002903">
    <property type="entry name" value="RsmH"/>
</dbReference>
<dbReference type="InterPro" id="IPR023397">
    <property type="entry name" value="SAM-dep_MeTrfase_MraW_recog"/>
</dbReference>
<dbReference type="InterPro" id="IPR029063">
    <property type="entry name" value="SAM-dependent_MTases_sf"/>
</dbReference>
<dbReference type="NCBIfam" id="TIGR00006">
    <property type="entry name" value="16S rRNA (cytosine(1402)-N(4))-methyltransferase RsmH"/>
    <property type="match status" value="1"/>
</dbReference>
<dbReference type="PANTHER" id="PTHR11265:SF0">
    <property type="entry name" value="12S RRNA N4-METHYLCYTIDINE METHYLTRANSFERASE"/>
    <property type="match status" value="1"/>
</dbReference>
<dbReference type="PANTHER" id="PTHR11265">
    <property type="entry name" value="S-ADENOSYL-METHYLTRANSFERASE MRAW"/>
    <property type="match status" value="1"/>
</dbReference>
<dbReference type="Pfam" id="PF01795">
    <property type="entry name" value="Methyltransf_5"/>
    <property type="match status" value="1"/>
</dbReference>
<dbReference type="PIRSF" id="PIRSF004486">
    <property type="entry name" value="MraW"/>
    <property type="match status" value="1"/>
</dbReference>
<dbReference type="SUPFAM" id="SSF81799">
    <property type="entry name" value="Putative methyltransferase TM0872, insert domain"/>
    <property type="match status" value="1"/>
</dbReference>
<dbReference type="SUPFAM" id="SSF53335">
    <property type="entry name" value="S-adenosyl-L-methionine-dependent methyltransferases"/>
    <property type="match status" value="1"/>
</dbReference>
<keyword id="KW-0963">Cytoplasm</keyword>
<keyword id="KW-0489">Methyltransferase</keyword>
<keyword id="KW-0698">rRNA processing</keyword>
<keyword id="KW-0949">S-adenosyl-L-methionine</keyword>
<keyword id="KW-0808">Transferase</keyword>
<reference key="1">
    <citation type="submission" date="2007-02" db="EMBL/GenBank/DDBJ databases">
        <title>Complete sequence of chromosome 1 of Rhodobacter sphaeroides ATCC 17029.</title>
        <authorList>
            <person name="Copeland A."/>
            <person name="Lucas S."/>
            <person name="Lapidus A."/>
            <person name="Barry K."/>
            <person name="Detter J.C."/>
            <person name="Glavina del Rio T."/>
            <person name="Hammon N."/>
            <person name="Israni S."/>
            <person name="Dalin E."/>
            <person name="Tice H."/>
            <person name="Pitluck S."/>
            <person name="Kiss H."/>
            <person name="Brettin T."/>
            <person name="Bruce D."/>
            <person name="Han C."/>
            <person name="Tapia R."/>
            <person name="Gilna P."/>
            <person name="Schmutz J."/>
            <person name="Larimer F."/>
            <person name="Land M."/>
            <person name="Hauser L."/>
            <person name="Kyrpides N."/>
            <person name="Mikhailova N."/>
            <person name="Richardson P."/>
            <person name="Mackenzie C."/>
            <person name="Choudhary M."/>
            <person name="Donohue T.J."/>
            <person name="Kaplan S."/>
        </authorList>
    </citation>
    <scope>NUCLEOTIDE SEQUENCE [LARGE SCALE GENOMIC DNA]</scope>
    <source>
        <strain>ATCC 17029 / ATH 2.4.9</strain>
    </source>
</reference>
<organism>
    <name type="scientific">Cereibacter sphaeroides (strain ATCC 17029 / ATH 2.4.9)</name>
    <name type="common">Rhodobacter sphaeroides</name>
    <dbReference type="NCBI Taxonomy" id="349101"/>
    <lineage>
        <taxon>Bacteria</taxon>
        <taxon>Pseudomonadati</taxon>
        <taxon>Pseudomonadota</taxon>
        <taxon>Alphaproteobacteria</taxon>
        <taxon>Rhodobacterales</taxon>
        <taxon>Paracoccaceae</taxon>
        <taxon>Cereibacter</taxon>
    </lineage>
</organism>
<comment type="function">
    <text evidence="1">Specifically methylates the N4 position of cytidine in position 1402 (C1402) of 16S rRNA.</text>
</comment>
<comment type="catalytic activity">
    <reaction evidence="1">
        <text>cytidine(1402) in 16S rRNA + S-adenosyl-L-methionine = N(4)-methylcytidine(1402) in 16S rRNA + S-adenosyl-L-homocysteine + H(+)</text>
        <dbReference type="Rhea" id="RHEA:42928"/>
        <dbReference type="Rhea" id="RHEA-COMP:10286"/>
        <dbReference type="Rhea" id="RHEA-COMP:10287"/>
        <dbReference type="ChEBI" id="CHEBI:15378"/>
        <dbReference type="ChEBI" id="CHEBI:57856"/>
        <dbReference type="ChEBI" id="CHEBI:59789"/>
        <dbReference type="ChEBI" id="CHEBI:74506"/>
        <dbReference type="ChEBI" id="CHEBI:82748"/>
        <dbReference type="EC" id="2.1.1.199"/>
    </reaction>
</comment>
<comment type="subcellular location">
    <subcellularLocation>
        <location evidence="1">Cytoplasm</location>
    </subcellularLocation>
</comment>
<comment type="similarity">
    <text evidence="1">Belongs to the methyltransferase superfamily. RsmH family.</text>
</comment>
<feature type="chain" id="PRO_0000387074" description="Ribosomal RNA small subunit methyltransferase H">
    <location>
        <begin position="1"/>
        <end position="331"/>
    </location>
</feature>
<feature type="region of interest" description="Disordered" evidence="2">
    <location>
        <begin position="289"/>
        <end position="331"/>
    </location>
</feature>
<feature type="binding site" evidence="1">
    <location>
        <begin position="38"/>
        <end position="40"/>
    </location>
    <ligand>
        <name>S-adenosyl-L-methionine</name>
        <dbReference type="ChEBI" id="CHEBI:59789"/>
    </ligand>
</feature>
<feature type="binding site" evidence="1">
    <location>
        <position position="56"/>
    </location>
    <ligand>
        <name>S-adenosyl-L-methionine</name>
        <dbReference type="ChEBI" id="CHEBI:59789"/>
    </ligand>
</feature>
<feature type="binding site" evidence="1">
    <location>
        <position position="83"/>
    </location>
    <ligand>
        <name>S-adenosyl-L-methionine</name>
        <dbReference type="ChEBI" id="CHEBI:59789"/>
    </ligand>
</feature>
<feature type="binding site" evidence="1">
    <location>
        <position position="100"/>
    </location>
    <ligand>
        <name>S-adenosyl-L-methionine</name>
        <dbReference type="ChEBI" id="CHEBI:59789"/>
    </ligand>
</feature>
<feature type="binding site" evidence="1">
    <location>
        <position position="107"/>
    </location>
    <ligand>
        <name>S-adenosyl-L-methionine</name>
        <dbReference type="ChEBI" id="CHEBI:59789"/>
    </ligand>
</feature>
<protein>
    <recommendedName>
        <fullName evidence="1">Ribosomal RNA small subunit methyltransferase H</fullName>
        <ecNumber evidence="1">2.1.1.199</ecNumber>
    </recommendedName>
    <alternativeName>
        <fullName evidence="1">16S rRNA m(4)C1402 methyltransferase</fullName>
    </alternativeName>
    <alternativeName>
        <fullName evidence="1">rRNA (cytosine-N(4)-)-methyltransferase RsmH</fullName>
    </alternativeName>
</protein>
<evidence type="ECO:0000255" key="1">
    <source>
        <dbReference type="HAMAP-Rule" id="MF_01007"/>
    </source>
</evidence>
<evidence type="ECO:0000256" key="2">
    <source>
        <dbReference type="SAM" id="MobiDB-lite"/>
    </source>
</evidence>
<proteinExistence type="inferred from homology"/>
<gene>
    <name evidence="1" type="primary">rsmH</name>
    <name type="synonym">mraW</name>
    <name type="ordered locus">Rsph17029_0772</name>
</gene>